<sequence length="434" mass="48237">MLSLTATTLSSSIFTQSKTHGFFNTRPVYRKPFTTITSALIPASNRQAPPKQQLYQPFRPPPSPIPPKFRSLDTAGKIEVLADRLGLWFEYAPLISSLYTEGFTPPSIEELTGISGVEQNSLIVGAQVRDSLVQSGAKPELIAAFDTNGAELLYEIRLLNTTQRVAAAEYIVDHGFDTKGAGDLARAIKDFPHRRGDVGLGDFDYNLPGDCLSFMLYRKSREHRSPSEIRTTLLEQALETAVTEKAKKAVLRELHGESEEERVKEEEIKIIRVPVVRLRFGEVAGASSVVVLPVCKAEEGEEKLLEAPMEFESGGEFGVVEAEKDWSRWVVLPGWDPVVAVRKGVAVSFSDDREVLPWNGKGEAIMVVIDREKKTVEADNGYYYLVVADGGMKLDRGLVLKEKGVNESLGMVVLVVRPPRDDDDEWQINDEDWD</sequence>
<comment type="function">
    <text evidence="2">Required for assembly or stability of RuBisCO. Acts at a postchaperonin step to fold and/or assemble the large subunit (rbcL) into RuBisCO. RAF1 binds first to a rbcL dimer (rbcL(2)), leading to a rbcL(8)-RAF1(4) complex formation. In the next step, RBCS displaces RAF1, thus resulting in holoenzyme formation.</text>
</comment>
<comment type="subunit">
    <text evidence="4">Homodimer.</text>
</comment>
<comment type="subcellular location">
    <subcellularLocation>
        <location evidence="6">Plastid</location>
        <location evidence="6">Chloroplast</location>
    </subcellularLocation>
</comment>
<comment type="alternative products">
    <event type="alternative splicing"/>
    <isoform>
        <id>Q9LKR8-1</id>
        <name>1</name>
        <sequence type="displayed"/>
    </isoform>
    <isoform>
        <id>Q9LKR8-2</id>
        <name>2</name>
        <sequence type="described" ref="VSP_053355 VSP_053356"/>
    </isoform>
</comment>
<comment type="domain">
    <text evidence="1 4">Has 3 domains, the N-terminal alpha-helical domain, an extended flexible linker and the C-terminal beta-sheet domain. The N-terminal alpha-helical domain stabilizes RbcL dimers and RbcL dimer-dimer interactions, facilitating RbcL(8) formation. The C-terminal beta-sheet domain probably dimerizes Raf1 (PubMed:26237510). The 2 C-terminal beta-sheet domains are swapped and pack against each other to form the dimer interface (By similarity).</text>
</comment>
<comment type="similarity">
    <text evidence="6">Belongs to the RAF family.</text>
</comment>
<feature type="transit peptide" description="Chloroplast" evidence="3">
    <location>
        <begin position="1"/>
        <end position="51"/>
    </location>
</feature>
<feature type="chain" id="PRO_0000424242" description="Rubisco accumulation factor 1.1, chloroplastic">
    <location>
        <begin position="52"/>
        <end position="434"/>
    </location>
</feature>
<feature type="region of interest" description="N-terminal alpha-helix" evidence="7">
    <location>
        <begin position="65"/>
        <end position="254"/>
    </location>
</feature>
<feature type="region of interest" description="C-terminal beta sheet" evidence="7">
    <location>
        <begin position="273"/>
        <end position="419"/>
    </location>
</feature>
<feature type="splice variant" id="VSP_053355" description="In isoform 2." evidence="6">
    <original>VKEEEIK</original>
    <variation>GKEDGGS</variation>
    <location>
        <begin position="263"/>
        <end position="269"/>
    </location>
</feature>
<feature type="splice variant" id="VSP_053356" description="In isoform 2." evidence="6">
    <location>
        <begin position="270"/>
        <end position="434"/>
    </location>
</feature>
<organism>
    <name type="scientific">Arabidopsis thaliana</name>
    <name type="common">Mouse-ear cress</name>
    <dbReference type="NCBI Taxonomy" id="3702"/>
    <lineage>
        <taxon>Eukaryota</taxon>
        <taxon>Viridiplantae</taxon>
        <taxon>Streptophyta</taxon>
        <taxon>Embryophyta</taxon>
        <taxon>Tracheophyta</taxon>
        <taxon>Spermatophyta</taxon>
        <taxon>Magnoliopsida</taxon>
        <taxon>eudicotyledons</taxon>
        <taxon>Gunneridae</taxon>
        <taxon>Pentapetalae</taxon>
        <taxon>rosids</taxon>
        <taxon>malvids</taxon>
        <taxon>Brassicales</taxon>
        <taxon>Brassicaceae</taxon>
        <taxon>Camelineae</taxon>
        <taxon>Arabidopsis</taxon>
    </lineage>
</organism>
<proteinExistence type="evidence at protein level"/>
<reference key="1">
    <citation type="journal article" date="2000" name="Nature">
        <title>Sequence and analysis of chromosome 5 of the plant Arabidopsis thaliana.</title>
        <authorList>
            <person name="Tabata S."/>
            <person name="Kaneko T."/>
            <person name="Nakamura Y."/>
            <person name="Kotani H."/>
            <person name="Kato T."/>
            <person name="Asamizu E."/>
            <person name="Miyajima N."/>
            <person name="Sasamoto S."/>
            <person name="Kimura T."/>
            <person name="Hosouchi T."/>
            <person name="Kawashima K."/>
            <person name="Kohara M."/>
            <person name="Matsumoto M."/>
            <person name="Matsuno A."/>
            <person name="Muraki A."/>
            <person name="Nakayama S."/>
            <person name="Nakazaki N."/>
            <person name="Naruo K."/>
            <person name="Okumura S."/>
            <person name="Shinpo S."/>
            <person name="Takeuchi C."/>
            <person name="Wada T."/>
            <person name="Watanabe A."/>
            <person name="Yamada M."/>
            <person name="Yasuda M."/>
            <person name="Sato S."/>
            <person name="de la Bastide M."/>
            <person name="Huang E."/>
            <person name="Spiegel L."/>
            <person name="Gnoj L."/>
            <person name="O'Shaughnessy A."/>
            <person name="Preston R."/>
            <person name="Habermann K."/>
            <person name="Murray J."/>
            <person name="Johnson D."/>
            <person name="Rohlfing T."/>
            <person name="Nelson J."/>
            <person name="Stoneking T."/>
            <person name="Pepin K."/>
            <person name="Spieth J."/>
            <person name="Sekhon M."/>
            <person name="Armstrong J."/>
            <person name="Becker M."/>
            <person name="Belter E."/>
            <person name="Cordum H."/>
            <person name="Cordes M."/>
            <person name="Courtney L."/>
            <person name="Courtney W."/>
            <person name="Dante M."/>
            <person name="Du H."/>
            <person name="Edwards J."/>
            <person name="Fryman J."/>
            <person name="Haakensen B."/>
            <person name="Lamar E."/>
            <person name="Latreille P."/>
            <person name="Leonard S."/>
            <person name="Meyer R."/>
            <person name="Mulvaney E."/>
            <person name="Ozersky P."/>
            <person name="Riley A."/>
            <person name="Strowmatt C."/>
            <person name="Wagner-McPherson C."/>
            <person name="Wollam A."/>
            <person name="Yoakum M."/>
            <person name="Bell M."/>
            <person name="Dedhia N."/>
            <person name="Parnell L."/>
            <person name="Shah R."/>
            <person name="Rodriguez M."/>
            <person name="Hoon See L."/>
            <person name="Vil D."/>
            <person name="Baker J."/>
            <person name="Kirchoff K."/>
            <person name="Toth K."/>
            <person name="King L."/>
            <person name="Bahret A."/>
            <person name="Miller B."/>
            <person name="Marra M.A."/>
            <person name="Martienssen R."/>
            <person name="McCombie W.R."/>
            <person name="Wilson R.K."/>
            <person name="Murphy G."/>
            <person name="Bancroft I."/>
            <person name="Volckaert G."/>
            <person name="Wambutt R."/>
            <person name="Duesterhoeft A."/>
            <person name="Stiekema W."/>
            <person name="Pohl T."/>
            <person name="Entian K.-D."/>
            <person name="Terryn N."/>
            <person name="Hartley N."/>
            <person name="Bent E."/>
            <person name="Johnson S."/>
            <person name="Langham S.-A."/>
            <person name="McCullagh B."/>
            <person name="Robben J."/>
            <person name="Grymonprez B."/>
            <person name="Zimmermann W."/>
            <person name="Ramsperger U."/>
            <person name="Wedler H."/>
            <person name="Balke K."/>
            <person name="Wedler E."/>
            <person name="Peters S."/>
            <person name="van Staveren M."/>
            <person name="Dirkse W."/>
            <person name="Mooijman P."/>
            <person name="Klein Lankhorst R."/>
            <person name="Weitzenegger T."/>
            <person name="Bothe G."/>
            <person name="Rose M."/>
            <person name="Hauf J."/>
            <person name="Berneiser S."/>
            <person name="Hempel S."/>
            <person name="Feldpausch M."/>
            <person name="Lamberth S."/>
            <person name="Villarroel R."/>
            <person name="Gielen J."/>
            <person name="Ardiles W."/>
            <person name="Bents O."/>
            <person name="Lemcke K."/>
            <person name="Kolesov G."/>
            <person name="Mayer K.F.X."/>
            <person name="Rudd S."/>
            <person name="Schoof H."/>
            <person name="Schueller C."/>
            <person name="Zaccaria P."/>
            <person name="Mewes H.-W."/>
            <person name="Bevan M."/>
            <person name="Fransz P.F."/>
        </authorList>
    </citation>
    <scope>NUCLEOTIDE SEQUENCE [LARGE SCALE GENOMIC DNA]</scope>
    <source>
        <strain>cv. Columbia</strain>
    </source>
</reference>
<reference key="2">
    <citation type="journal article" date="2017" name="Plant J.">
        <title>Araport11: a complete reannotation of the Arabidopsis thaliana reference genome.</title>
        <authorList>
            <person name="Cheng C.Y."/>
            <person name="Krishnakumar V."/>
            <person name="Chan A.P."/>
            <person name="Thibaud-Nissen F."/>
            <person name="Schobel S."/>
            <person name="Town C.D."/>
        </authorList>
    </citation>
    <scope>GENOME REANNOTATION</scope>
    <source>
        <strain>cv. Columbia</strain>
    </source>
</reference>
<reference key="3">
    <citation type="journal article" date="2003" name="Science">
        <title>Empirical analysis of transcriptional activity in the Arabidopsis genome.</title>
        <authorList>
            <person name="Yamada K."/>
            <person name="Lim J."/>
            <person name="Dale J.M."/>
            <person name="Chen H."/>
            <person name="Shinn P."/>
            <person name="Palm C.J."/>
            <person name="Southwick A.M."/>
            <person name="Wu H.C."/>
            <person name="Kim C.J."/>
            <person name="Nguyen M."/>
            <person name="Pham P.K."/>
            <person name="Cheuk R.F."/>
            <person name="Karlin-Newmann G."/>
            <person name="Liu S.X."/>
            <person name="Lam B."/>
            <person name="Sakano H."/>
            <person name="Wu T."/>
            <person name="Yu G."/>
            <person name="Miranda M."/>
            <person name="Quach H.L."/>
            <person name="Tripp M."/>
            <person name="Chang C.H."/>
            <person name="Lee J.M."/>
            <person name="Toriumi M.J."/>
            <person name="Chan M.M."/>
            <person name="Tang C.C."/>
            <person name="Onodera C.S."/>
            <person name="Deng J.M."/>
            <person name="Akiyama K."/>
            <person name="Ansari Y."/>
            <person name="Arakawa T."/>
            <person name="Banh J."/>
            <person name="Banno F."/>
            <person name="Bowser L."/>
            <person name="Brooks S.Y."/>
            <person name="Carninci P."/>
            <person name="Chao Q."/>
            <person name="Choy N."/>
            <person name="Enju A."/>
            <person name="Goldsmith A.D."/>
            <person name="Gurjal M."/>
            <person name="Hansen N.F."/>
            <person name="Hayashizaki Y."/>
            <person name="Johnson-Hopson C."/>
            <person name="Hsuan V.W."/>
            <person name="Iida K."/>
            <person name="Karnes M."/>
            <person name="Khan S."/>
            <person name="Koesema E."/>
            <person name="Ishida J."/>
            <person name="Jiang P.X."/>
            <person name="Jones T."/>
            <person name="Kawai J."/>
            <person name="Kamiya A."/>
            <person name="Meyers C."/>
            <person name="Nakajima M."/>
            <person name="Narusaka M."/>
            <person name="Seki M."/>
            <person name="Sakurai T."/>
            <person name="Satou M."/>
            <person name="Tamse R."/>
            <person name="Vaysberg M."/>
            <person name="Wallender E.K."/>
            <person name="Wong C."/>
            <person name="Yamamura Y."/>
            <person name="Yuan S."/>
            <person name="Shinozaki K."/>
            <person name="Davis R.W."/>
            <person name="Theologis A."/>
            <person name="Ecker J.R."/>
        </authorList>
    </citation>
    <scope>NUCLEOTIDE SEQUENCE [LARGE SCALE MRNA] (ISOFORM 1)</scope>
    <source>
        <strain>cv. Columbia</strain>
    </source>
</reference>
<reference key="4">
    <citation type="submission" date="2004-10" db="EMBL/GenBank/DDBJ databases">
        <title>Arabidopsis ORF clones.</title>
        <authorList>
            <person name="Shinn P."/>
            <person name="Chen H."/>
            <person name="Cheuk R."/>
            <person name="Kim C.J."/>
            <person name="Ecker J.R."/>
        </authorList>
    </citation>
    <scope>NUCLEOTIDE SEQUENCE [LARGE SCALE MRNA] (ISOFORM 1)</scope>
</reference>
<reference key="5">
    <citation type="journal article" date="2012" name="Plant Cell">
        <title>Ribulose-1,5-bis-phosphate carboxylase/oxygenase accumulation factor1 is required for holoenzyme assembly in maize.</title>
        <authorList>
            <person name="Feiz L."/>
            <person name="Williams-Carrier R."/>
            <person name="Wostrikoff K."/>
            <person name="Belcher S."/>
            <person name="Barkan A."/>
            <person name="Stern D.B."/>
        </authorList>
    </citation>
    <scope>IDENTIFICATION</scope>
</reference>
<reference key="6">
    <citation type="journal article" date="2015" name="Nat. Struct. Mol. Biol.">
        <title>Structure and mechanism of the Rubisco-assembly chaperone Raf1.</title>
        <authorList>
            <person name="Hauser T."/>
            <person name="Bhat J.Y."/>
            <person name="Milicic G."/>
            <person name="Wendler P."/>
            <person name="Hartl F.U."/>
            <person name="Bracher A."/>
            <person name="Hayer-Hartl M."/>
        </authorList>
    </citation>
    <scope>SUBUNIT</scope>
</reference>
<evidence type="ECO:0000250" key="1">
    <source>
        <dbReference type="UniProtKB" id="Q8YLP6"/>
    </source>
</evidence>
<evidence type="ECO:0000250" key="2">
    <source>
        <dbReference type="UniProtKB" id="Q9SR19"/>
    </source>
</evidence>
<evidence type="ECO:0000255" key="3"/>
<evidence type="ECO:0000269" key="4">
    <source>
    </source>
</evidence>
<evidence type="ECO:0000303" key="5">
    <source>
    </source>
</evidence>
<evidence type="ECO:0000305" key="6"/>
<evidence type="ECO:0000305" key="7">
    <source>
    </source>
</evidence>
<evidence type="ECO:0000312" key="8">
    <source>
        <dbReference type="Araport" id="AT5G28500"/>
    </source>
</evidence>
<evidence type="ECO:0000312" key="9">
    <source>
        <dbReference type="EMBL" id="AAF88015.1"/>
    </source>
</evidence>
<name>RAF1_ARATH</name>
<keyword id="KW-0025">Alternative splicing</keyword>
<keyword id="KW-0143">Chaperone</keyword>
<keyword id="KW-0150">Chloroplast</keyword>
<keyword id="KW-0934">Plastid</keyword>
<keyword id="KW-1185">Reference proteome</keyword>
<keyword id="KW-0809">Transit peptide</keyword>
<accession>Q9LKR8</accession>
<accession>F4K8I9</accession>
<protein>
    <recommendedName>
        <fullName evidence="5">Rubisco accumulation factor 1.1, chloroplastic</fullName>
    </recommendedName>
</protein>
<dbReference type="EMBL" id="AF262043">
    <property type="protein sequence ID" value="AAF88015.1"/>
    <property type="molecule type" value="Genomic_DNA"/>
</dbReference>
<dbReference type="EMBL" id="CP002688">
    <property type="protein sequence ID" value="AED93807.1"/>
    <property type="molecule type" value="Genomic_DNA"/>
</dbReference>
<dbReference type="EMBL" id="CP002688">
    <property type="protein sequence ID" value="AED93808.1"/>
    <property type="molecule type" value="Genomic_DNA"/>
</dbReference>
<dbReference type="EMBL" id="BT000776">
    <property type="protein sequence ID" value="AAN31915.1"/>
    <property type="molecule type" value="mRNA"/>
</dbReference>
<dbReference type="EMBL" id="BT015787">
    <property type="protein sequence ID" value="AAU90077.1"/>
    <property type="molecule type" value="mRNA"/>
</dbReference>
<dbReference type="RefSeq" id="NP_001190416.1">
    <molecule id="Q9LKR8-2"/>
    <property type="nucleotide sequence ID" value="NM_001203487.1"/>
</dbReference>
<dbReference type="RefSeq" id="NP_198202.1">
    <molecule id="Q9LKR8-1"/>
    <property type="nucleotide sequence ID" value="NM_122733.3"/>
</dbReference>
<dbReference type="SMR" id="Q9LKR8"/>
<dbReference type="BioGRID" id="18216">
    <property type="interactions" value="2"/>
</dbReference>
<dbReference type="FunCoup" id="Q9LKR8">
    <property type="interactions" value="1231"/>
</dbReference>
<dbReference type="STRING" id="3702.Q9LKR8"/>
<dbReference type="iPTMnet" id="Q9LKR8"/>
<dbReference type="PaxDb" id="3702-AT5G28500.1"/>
<dbReference type="ProMEX" id="Q9LKR8"/>
<dbReference type="ProteomicsDB" id="236503">
    <molecule id="Q9LKR8-1"/>
</dbReference>
<dbReference type="EnsemblPlants" id="AT5G28500.1">
    <molecule id="Q9LKR8-1"/>
    <property type="protein sequence ID" value="AT5G28500.1"/>
    <property type="gene ID" value="AT5G28500"/>
</dbReference>
<dbReference type="EnsemblPlants" id="AT5G28500.2">
    <molecule id="Q9LKR8-2"/>
    <property type="protein sequence ID" value="AT5G28500.2"/>
    <property type="gene ID" value="AT5G28500"/>
</dbReference>
<dbReference type="GeneID" id="832943"/>
<dbReference type="Gramene" id="AT5G28500.1">
    <molecule id="Q9LKR8-1"/>
    <property type="protein sequence ID" value="AT5G28500.1"/>
    <property type="gene ID" value="AT5G28500"/>
</dbReference>
<dbReference type="Gramene" id="AT5G28500.2">
    <molecule id="Q9LKR8-2"/>
    <property type="protein sequence ID" value="AT5G28500.2"/>
    <property type="gene ID" value="AT5G28500"/>
</dbReference>
<dbReference type="KEGG" id="ath:AT5G28500"/>
<dbReference type="Araport" id="AT5G28500"/>
<dbReference type="TAIR" id="AT5G28500"/>
<dbReference type="eggNOG" id="ENOG502QRYH">
    <property type="taxonomic scope" value="Eukaryota"/>
</dbReference>
<dbReference type="HOGENOM" id="CLU_041979_0_0_1"/>
<dbReference type="InParanoid" id="Q9LKR8"/>
<dbReference type="OMA" id="LWHEYAP"/>
<dbReference type="PhylomeDB" id="Q9LKR8"/>
<dbReference type="PRO" id="PR:Q9LKR8"/>
<dbReference type="Proteomes" id="UP000006548">
    <property type="component" value="Chromosome 5"/>
</dbReference>
<dbReference type="ExpressionAtlas" id="Q9LKR8">
    <property type="expression patterns" value="baseline and differential"/>
</dbReference>
<dbReference type="GO" id="GO:0009507">
    <property type="term" value="C:chloroplast"/>
    <property type="evidence" value="ECO:0007005"/>
    <property type="project" value="TAIR"/>
</dbReference>
<dbReference type="GO" id="GO:0009570">
    <property type="term" value="C:chloroplast stroma"/>
    <property type="evidence" value="ECO:0007005"/>
    <property type="project" value="TAIR"/>
</dbReference>
<dbReference type="GO" id="GO:0009536">
    <property type="term" value="C:plastid"/>
    <property type="evidence" value="ECO:0007005"/>
    <property type="project" value="TAIR"/>
</dbReference>
<dbReference type="GO" id="GO:0110102">
    <property type="term" value="P:ribulose bisphosphate carboxylase complex assembly"/>
    <property type="evidence" value="ECO:0007669"/>
    <property type="project" value="UniProtKB-ARBA"/>
</dbReference>
<dbReference type="InterPro" id="IPR037494">
    <property type="entry name" value="RAF1"/>
</dbReference>
<dbReference type="InterPro" id="IPR040858">
    <property type="entry name" value="Raf1_C"/>
</dbReference>
<dbReference type="InterPro" id="IPR040781">
    <property type="entry name" value="Raf1_HTH"/>
</dbReference>
<dbReference type="InterPro" id="IPR041358">
    <property type="entry name" value="Raf1_N"/>
</dbReference>
<dbReference type="PANTHER" id="PTHR35299">
    <property type="entry name" value="RUBISCO ACCUMULATION FACTOR 1"/>
    <property type="match status" value="1"/>
</dbReference>
<dbReference type="PANTHER" id="PTHR35299:SF4">
    <property type="entry name" value="RUBISCO ACCUMULATION FACTOR 1.1, CHLOROPLASTIC"/>
    <property type="match status" value="1"/>
</dbReference>
<dbReference type="Pfam" id="PF18579">
    <property type="entry name" value="Raf1_HTH"/>
    <property type="match status" value="1"/>
</dbReference>
<dbReference type="Pfam" id="PF18578">
    <property type="entry name" value="Raf1_N"/>
    <property type="match status" value="1"/>
</dbReference>
<dbReference type="Pfam" id="PF18087">
    <property type="entry name" value="RuBisCo_chap_C"/>
    <property type="match status" value="1"/>
</dbReference>
<gene>
    <name evidence="5" type="primary">RAF1.1</name>
    <name evidence="8" type="ordered locus">At5g28500</name>
    <name evidence="9" type="ORF">T26D3.4</name>
</gene>